<proteinExistence type="inferred from homology"/>
<protein>
    <recommendedName>
        <fullName evidence="1">Putative pre-16S rRNA nuclease</fullName>
        <ecNumber evidence="1">3.1.-.-</ecNumber>
    </recommendedName>
</protein>
<organism>
    <name type="scientific">Staphylococcus aureus (strain USA300 / TCH1516)</name>
    <dbReference type="NCBI Taxonomy" id="451516"/>
    <lineage>
        <taxon>Bacteria</taxon>
        <taxon>Bacillati</taxon>
        <taxon>Bacillota</taxon>
        <taxon>Bacilli</taxon>
        <taxon>Bacillales</taxon>
        <taxon>Staphylococcaceae</taxon>
        <taxon>Staphylococcus</taxon>
    </lineage>
</organism>
<comment type="function">
    <text evidence="1">Could be a nuclease involved in processing of the 5'-end of pre-16S rRNA.</text>
</comment>
<comment type="subcellular location">
    <subcellularLocation>
        <location evidence="1">Cytoplasm</location>
    </subcellularLocation>
</comment>
<comment type="similarity">
    <text evidence="1">Belongs to the YqgF nuclease family.</text>
</comment>
<dbReference type="EC" id="3.1.-.-" evidence="1"/>
<dbReference type="EMBL" id="CP000730">
    <property type="protein sequence ID" value="ABX29623.1"/>
    <property type="molecule type" value="Genomic_DNA"/>
</dbReference>
<dbReference type="SMR" id="A8Z4F4"/>
<dbReference type="KEGG" id="sax:USA300HOU_1616"/>
<dbReference type="HOGENOM" id="CLU_098240_2_0_9"/>
<dbReference type="BioCyc" id="SAUR451516-HMP:GTV5-1635-MONOMER"/>
<dbReference type="GO" id="GO:0005829">
    <property type="term" value="C:cytosol"/>
    <property type="evidence" value="ECO:0007669"/>
    <property type="project" value="TreeGrafter"/>
</dbReference>
<dbReference type="GO" id="GO:0004518">
    <property type="term" value="F:nuclease activity"/>
    <property type="evidence" value="ECO:0007669"/>
    <property type="project" value="UniProtKB-KW"/>
</dbReference>
<dbReference type="GO" id="GO:0000967">
    <property type="term" value="P:rRNA 5'-end processing"/>
    <property type="evidence" value="ECO:0007669"/>
    <property type="project" value="UniProtKB-UniRule"/>
</dbReference>
<dbReference type="CDD" id="cd16964">
    <property type="entry name" value="YqgF"/>
    <property type="match status" value="1"/>
</dbReference>
<dbReference type="FunFam" id="3.30.420.140:FF:000003">
    <property type="entry name" value="Putative pre-16S rRNA nuclease"/>
    <property type="match status" value="1"/>
</dbReference>
<dbReference type="Gene3D" id="3.30.420.140">
    <property type="entry name" value="YqgF/RNase H-like domain"/>
    <property type="match status" value="1"/>
</dbReference>
<dbReference type="HAMAP" id="MF_00651">
    <property type="entry name" value="Nuclease_YqgF"/>
    <property type="match status" value="1"/>
</dbReference>
<dbReference type="InterPro" id="IPR012337">
    <property type="entry name" value="RNaseH-like_sf"/>
</dbReference>
<dbReference type="InterPro" id="IPR005227">
    <property type="entry name" value="YqgF"/>
</dbReference>
<dbReference type="InterPro" id="IPR006641">
    <property type="entry name" value="YqgF/RNaseH-like_dom"/>
</dbReference>
<dbReference type="InterPro" id="IPR037027">
    <property type="entry name" value="YqgF/RNaseH-like_dom_sf"/>
</dbReference>
<dbReference type="NCBIfam" id="TIGR00250">
    <property type="entry name" value="RNAse_H_YqgF"/>
    <property type="match status" value="1"/>
</dbReference>
<dbReference type="PANTHER" id="PTHR33317">
    <property type="entry name" value="POLYNUCLEOTIDYL TRANSFERASE, RIBONUCLEASE H-LIKE SUPERFAMILY PROTEIN"/>
    <property type="match status" value="1"/>
</dbReference>
<dbReference type="PANTHER" id="PTHR33317:SF4">
    <property type="entry name" value="POLYNUCLEOTIDYL TRANSFERASE, RIBONUCLEASE H-LIKE SUPERFAMILY PROTEIN"/>
    <property type="match status" value="1"/>
</dbReference>
<dbReference type="Pfam" id="PF03652">
    <property type="entry name" value="RuvX"/>
    <property type="match status" value="1"/>
</dbReference>
<dbReference type="SMART" id="SM00732">
    <property type="entry name" value="YqgFc"/>
    <property type="match status" value="1"/>
</dbReference>
<dbReference type="SUPFAM" id="SSF53098">
    <property type="entry name" value="Ribonuclease H-like"/>
    <property type="match status" value="1"/>
</dbReference>
<accession>A8Z4F4</accession>
<reference key="1">
    <citation type="journal article" date="2007" name="BMC Microbiol.">
        <title>Subtle genetic changes enhance virulence of methicillin resistant and sensitive Staphylococcus aureus.</title>
        <authorList>
            <person name="Highlander S.K."/>
            <person name="Hulten K.G."/>
            <person name="Qin X."/>
            <person name="Jiang H."/>
            <person name="Yerrapragada S."/>
            <person name="Mason E.O. Jr."/>
            <person name="Shang Y."/>
            <person name="Williams T.M."/>
            <person name="Fortunov R.M."/>
            <person name="Liu Y."/>
            <person name="Igboeli O."/>
            <person name="Petrosino J."/>
            <person name="Tirumalai M."/>
            <person name="Uzman A."/>
            <person name="Fox G.E."/>
            <person name="Cardenas A.M."/>
            <person name="Muzny D.M."/>
            <person name="Hemphill L."/>
            <person name="Ding Y."/>
            <person name="Dugan S."/>
            <person name="Blyth P.R."/>
            <person name="Buhay C.J."/>
            <person name="Dinh H.H."/>
            <person name="Hawes A.C."/>
            <person name="Holder M."/>
            <person name="Kovar C.L."/>
            <person name="Lee S.L."/>
            <person name="Liu W."/>
            <person name="Nazareth L.V."/>
            <person name="Wang Q."/>
            <person name="Zhou J."/>
            <person name="Kaplan S.L."/>
            <person name="Weinstock G.M."/>
        </authorList>
    </citation>
    <scope>NUCLEOTIDE SEQUENCE [LARGE SCALE GENOMIC DNA]</scope>
    <source>
        <strain>USA300 / TCH1516</strain>
    </source>
</reference>
<sequence>MLQHKILGLDVGSRTVGIAISDIMGWTAQGLDTLRINEENNELGIDQLVDIIKKHNVGTVVIGLPKNMNNSIGFRGEASLTYKEKLLEAYPSIEIVMWDERLSTMAAERSLLEADVSRQKRKQVIDKMAAVFILQGYLDSLH</sequence>
<feature type="chain" id="PRO_1000082757" description="Putative pre-16S rRNA nuclease">
    <location>
        <begin position="1"/>
        <end position="142"/>
    </location>
</feature>
<name>YQGF_STAAT</name>
<evidence type="ECO:0000255" key="1">
    <source>
        <dbReference type="HAMAP-Rule" id="MF_00651"/>
    </source>
</evidence>
<keyword id="KW-0963">Cytoplasm</keyword>
<keyword id="KW-0378">Hydrolase</keyword>
<keyword id="KW-0540">Nuclease</keyword>
<keyword id="KW-0690">Ribosome biogenesis</keyword>
<gene>
    <name type="ordered locus">USA300HOU_1616</name>
</gene>